<sequence length="441" mass="50288">MTSQYSNYSCPLNNIQVNVIGSSRTSDDHFLEQMLTKRKKTNISQDLHYTLLGLNPRDLYQISIKLARIDEKKYKFNGNFNGGDYYPHKNSEIPMEDTEEIVHLDGYQTGARWMKTGVYFPKIGISKEQPDKERCLLLESLHAYVPVLRFTTSSGISLEVTVWSQKFVTTMTSSNRSVKRREKRKLEETTGPSAKKTPEVIEFTQEAVVPEVYNAQQVYQMQNDTMISSDSKFCSPLAFQQDFTEEFGTISQLDAYVNVNVQSCSSSSLSSPAALQQDSTVSSDNDFDDKNSEEFDAVFEYIDQQFSNHDQNPMDQQSKSIDLNQTTWTSQSINNQSYLSTASSPAALNQDSFASEKSSIVRDKKNDENCLDEFDRVFNELDQQFTPTENQLQDLSNCTTWNQEPINNSIQSNQLNNNIAPALEENVEDDNAIFEHFFICN</sequence>
<accession>O61764</accession>
<name>TBX32_CAEEL</name>
<evidence type="ECO:0000255" key="1">
    <source>
        <dbReference type="PROSITE-ProRule" id="PRU00201"/>
    </source>
</evidence>
<evidence type="ECO:0000256" key="2">
    <source>
        <dbReference type="SAM" id="MobiDB-lite"/>
    </source>
</evidence>
<organism>
    <name type="scientific">Caenorhabditis elegans</name>
    <dbReference type="NCBI Taxonomy" id="6239"/>
    <lineage>
        <taxon>Eukaryota</taxon>
        <taxon>Metazoa</taxon>
        <taxon>Ecdysozoa</taxon>
        <taxon>Nematoda</taxon>
        <taxon>Chromadorea</taxon>
        <taxon>Rhabditida</taxon>
        <taxon>Rhabditina</taxon>
        <taxon>Rhabditomorpha</taxon>
        <taxon>Rhabditoidea</taxon>
        <taxon>Rhabditidae</taxon>
        <taxon>Peloderinae</taxon>
        <taxon>Caenorhabditis</taxon>
    </lineage>
</organism>
<comment type="subcellular location">
    <subcellularLocation>
        <location evidence="1">Nucleus</location>
    </subcellularLocation>
</comment>
<keyword id="KW-0238">DNA-binding</keyword>
<keyword id="KW-0539">Nucleus</keyword>
<keyword id="KW-1185">Reference proteome</keyword>
<keyword id="KW-0804">Transcription</keyword>
<keyword id="KW-0805">Transcription regulation</keyword>
<feature type="chain" id="PRO_0000184477" description="Putative T-box protein 32">
    <location>
        <begin position="1"/>
        <end position="441"/>
    </location>
</feature>
<feature type="DNA-binding region" description="T-box" evidence="1">
    <location>
        <begin position="18"/>
        <end position="199"/>
    </location>
</feature>
<feature type="region of interest" description="Disordered" evidence="2">
    <location>
        <begin position="268"/>
        <end position="289"/>
    </location>
</feature>
<feature type="compositionally biased region" description="Polar residues" evidence="2">
    <location>
        <begin position="273"/>
        <end position="284"/>
    </location>
</feature>
<proteinExistence type="inferred from homology"/>
<gene>
    <name type="primary">tbx-32</name>
    <name type="ORF">ZK380.1</name>
</gene>
<dbReference type="EMBL" id="FO081544">
    <property type="protein sequence ID" value="CCD72316.1"/>
    <property type="molecule type" value="Genomic_DNA"/>
</dbReference>
<dbReference type="PIR" id="E89467">
    <property type="entry name" value="E89467"/>
</dbReference>
<dbReference type="PIR" id="T33067">
    <property type="entry name" value="T33067"/>
</dbReference>
<dbReference type="RefSeq" id="NP_508304.2">
    <property type="nucleotide sequence ID" value="NM_075903.4"/>
</dbReference>
<dbReference type="SMR" id="O61764"/>
<dbReference type="STRING" id="6239.ZK380.1.1"/>
<dbReference type="PaxDb" id="6239-ZK380.1"/>
<dbReference type="EnsemblMetazoa" id="ZK380.1.1">
    <property type="protein sequence ID" value="ZK380.1.1"/>
    <property type="gene ID" value="WBGene00006551"/>
</dbReference>
<dbReference type="GeneID" id="191303"/>
<dbReference type="KEGG" id="cel:CELE_ZK380.1"/>
<dbReference type="UCSC" id="ZK380.1">
    <property type="organism name" value="c. elegans"/>
</dbReference>
<dbReference type="AGR" id="WB:WBGene00006551"/>
<dbReference type="CTD" id="191303"/>
<dbReference type="WormBase" id="ZK380.1">
    <property type="protein sequence ID" value="CE41092"/>
    <property type="gene ID" value="WBGene00006551"/>
    <property type="gene designation" value="tbx-32"/>
</dbReference>
<dbReference type="eggNOG" id="KOG3585">
    <property type="taxonomic scope" value="Eukaryota"/>
</dbReference>
<dbReference type="GeneTree" id="ENSGT00970000197570"/>
<dbReference type="HOGENOM" id="CLU_621486_0_0_1"/>
<dbReference type="InParanoid" id="O61764"/>
<dbReference type="PhylomeDB" id="O61764"/>
<dbReference type="PRO" id="PR:O61764"/>
<dbReference type="Proteomes" id="UP000001940">
    <property type="component" value="Chromosome X"/>
</dbReference>
<dbReference type="Bgee" id="WBGene00006551">
    <property type="expression patterns" value="Expressed in embryo and 1 other cell type or tissue"/>
</dbReference>
<dbReference type="GO" id="GO:0000785">
    <property type="term" value="C:chromatin"/>
    <property type="evidence" value="ECO:0000318"/>
    <property type="project" value="GO_Central"/>
</dbReference>
<dbReference type="GO" id="GO:0005634">
    <property type="term" value="C:nucleus"/>
    <property type="evidence" value="ECO:0000318"/>
    <property type="project" value="GO_Central"/>
</dbReference>
<dbReference type="GO" id="GO:0000981">
    <property type="term" value="F:DNA-binding transcription factor activity, RNA polymerase II-specific"/>
    <property type="evidence" value="ECO:0000318"/>
    <property type="project" value="GO_Central"/>
</dbReference>
<dbReference type="GO" id="GO:0000978">
    <property type="term" value="F:RNA polymerase II cis-regulatory region sequence-specific DNA binding"/>
    <property type="evidence" value="ECO:0000318"/>
    <property type="project" value="GO_Central"/>
</dbReference>
<dbReference type="GO" id="GO:0001708">
    <property type="term" value="P:cell fate specification"/>
    <property type="evidence" value="ECO:0000318"/>
    <property type="project" value="GO_Central"/>
</dbReference>
<dbReference type="GO" id="GO:0045893">
    <property type="term" value="P:positive regulation of DNA-templated transcription"/>
    <property type="evidence" value="ECO:0007669"/>
    <property type="project" value="InterPro"/>
</dbReference>
<dbReference type="GO" id="GO:0006357">
    <property type="term" value="P:regulation of transcription by RNA polymerase II"/>
    <property type="evidence" value="ECO:0000318"/>
    <property type="project" value="GO_Central"/>
</dbReference>
<dbReference type="FunFam" id="2.60.40.820:FF:000037">
    <property type="entry name" value="Putative T-box protein 31"/>
    <property type="match status" value="1"/>
</dbReference>
<dbReference type="Gene3D" id="2.60.40.820">
    <property type="entry name" value="Transcription factor, T-box"/>
    <property type="match status" value="1"/>
</dbReference>
<dbReference type="InterPro" id="IPR008967">
    <property type="entry name" value="p53-like_TF_DNA-bd_sf"/>
</dbReference>
<dbReference type="InterPro" id="IPR046360">
    <property type="entry name" value="T-box_DNA-bd"/>
</dbReference>
<dbReference type="InterPro" id="IPR036960">
    <property type="entry name" value="T-box_sf"/>
</dbReference>
<dbReference type="InterPro" id="IPR001699">
    <property type="entry name" value="TF_T-box"/>
</dbReference>
<dbReference type="InterPro" id="IPR018186">
    <property type="entry name" value="TF_T-box_CS"/>
</dbReference>
<dbReference type="PANTHER" id="PTHR11267:SF189">
    <property type="entry name" value="T-BOX PROTEIN 31-RELATED"/>
    <property type="match status" value="1"/>
</dbReference>
<dbReference type="PANTHER" id="PTHR11267">
    <property type="entry name" value="T-BOX PROTEIN-RELATED"/>
    <property type="match status" value="1"/>
</dbReference>
<dbReference type="Pfam" id="PF00907">
    <property type="entry name" value="T-box"/>
    <property type="match status" value="1"/>
</dbReference>
<dbReference type="SMART" id="SM00425">
    <property type="entry name" value="TBOX"/>
    <property type="match status" value="1"/>
</dbReference>
<dbReference type="SUPFAM" id="SSF49417">
    <property type="entry name" value="p53-like transcription factors"/>
    <property type="match status" value="1"/>
</dbReference>
<dbReference type="PROSITE" id="PS01264">
    <property type="entry name" value="TBOX_2"/>
    <property type="match status" value="1"/>
</dbReference>
<dbReference type="PROSITE" id="PS50252">
    <property type="entry name" value="TBOX_3"/>
    <property type="match status" value="1"/>
</dbReference>
<reference key="1">
    <citation type="journal article" date="1998" name="Science">
        <title>Genome sequence of the nematode C. elegans: a platform for investigating biology.</title>
        <authorList>
            <consortium name="The C. elegans sequencing consortium"/>
        </authorList>
    </citation>
    <scope>NUCLEOTIDE SEQUENCE [LARGE SCALE GENOMIC DNA]</scope>
    <source>
        <strain>Bristol N2</strain>
    </source>
</reference>
<protein>
    <recommendedName>
        <fullName>Putative T-box protein 32</fullName>
    </recommendedName>
</protein>